<sequence length="10" mass="1253">LMYYTLPRPV</sequence>
<name>TRPJ1_PHAJA</name>
<comment type="subcellular location">
    <subcellularLocation>
        <location evidence="1">Secreted</location>
    </subcellularLocation>
</comment>
<comment type="tissue specificity">
    <text evidence="1">Expressed by the skin glands.</text>
</comment>
<comment type="mass spectrometry" mass="1250.7" method="MALDI" evidence="1"/>
<accession>P86709</accession>
<feature type="peptide" id="PRO_0000404647" description="Peptide TRP-J1" evidence="1">
    <location>
        <begin position="1"/>
        <end position="10"/>
    </location>
</feature>
<feature type="modified residue" description="Valine amide" evidence="1">
    <location>
        <position position="10"/>
    </location>
</feature>
<feature type="unsure residue" description="L or I" evidence="2">
    <location>
        <position position="1"/>
    </location>
</feature>
<feature type="unsure residue" description="L or I" evidence="2">
    <location>
        <position position="6"/>
    </location>
</feature>
<dbReference type="GO" id="GO:0005576">
    <property type="term" value="C:extracellular region"/>
    <property type="evidence" value="ECO:0007669"/>
    <property type="project" value="UniProtKB-SubCell"/>
</dbReference>
<proteinExistence type="evidence at protein level"/>
<organism>
    <name type="scientific">Phasmahyla jandaia</name>
    <name type="common">Jandaia leaf frog</name>
    <name type="synonym">Phyllomedusa jandaia</name>
    <dbReference type="NCBI Taxonomy" id="762504"/>
    <lineage>
        <taxon>Eukaryota</taxon>
        <taxon>Metazoa</taxon>
        <taxon>Chordata</taxon>
        <taxon>Craniata</taxon>
        <taxon>Vertebrata</taxon>
        <taxon>Euteleostomi</taxon>
        <taxon>Amphibia</taxon>
        <taxon>Batrachia</taxon>
        <taxon>Anura</taxon>
        <taxon>Neobatrachia</taxon>
        <taxon>Hyloidea</taxon>
        <taxon>Hylidae</taxon>
        <taxon>Phyllomedusinae</taxon>
        <taxon>Phasmahyla</taxon>
    </lineage>
</organism>
<reference evidence="2" key="1">
    <citation type="journal article" date="2011" name="Toxicon">
        <title>Peptidomic dissection of the skin secretion of Phasmahyla jandaia (Bokermann and Sazima, 1978) (Anura, Hylidae, Phyllomedusinae).</title>
        <authorList>
            <person name="Rates B."/>
            <person name="Silva L.P."/>
            <person name="Ireno I.C."/>
            <person name="Leite F.S."/>
            <person name="Borges M.H."/>
            <person name="Bloch C. Jr."/>
            <person name="De Lima M.E."/>
            <person name="Pimenta A.M."/>
        </authorList>
    </citation>
    <scope>PROTEIN SEQUENCE</scope>
    <scope>SUBCELLULAR LOCATION</scope>
    <scope>TISSUE SPECIFICITY</scope>
    <scope>MASS SPECTROMETRY</scope>
    <scope>AMIDATION AT VAL-10</scope>
    <source>
        <tissue evidence="1">Skin secretion</tissue>
    </source>
</reference>
<protein>
    <recommendedName>
        <fullName>Peptide TRP-J1</fullName>
    </recommendedName>
</protein>
<keyword id="KW-0027">Amidation</keyword>
<keyword id="KW-0903">Direct protein sequencing</keyword>
<keyword id="KW-0964">Secreted</keyword>
<evidence type="ECO:0000269" key="1">
    <source>
    </source>
</evidence>
<evidence type="ECO:0000305" key="2"/>